<keyword id="KW-0002">3D-structure</keyword>
<keyword id="KW-0963">Cytoplasm</keyword>
<keyword id="KW-0507">mRNA processing</keyword>
<keyword id="KW-0508">mRNA splicing</keyword>
<keyword id="KW-0539">Nucleus</keyword>
<keyword id="KW-1185">Reference proteome</keyword>
<name>PML1_YEAST</name>
<dbReference type="EMBL" id="X90564">
    <property type="protein sequence ID" value="CAA62157.1"/>
    <property type="status" value="ALT_FRAME"/>
    <property type="molecule type" value="Genomic_DNA"/>
</dbReference>
<dbReference type="EMBL" id="Z73188">
    <property type="protein sequence ID" value="CAA97538.1"/>
    <property type="molecule type" value="Genomic_DNA"/>
</dbReference>
<dbReference type="EMBL" id="AY557934">
    <property type="protein sequence ID" value="AAS56260.1"/>
    <property type="molecule type" value="Genomic_DNA"/>
</dbReference>
<dbReference type="EMBL" id="BK006945">
    <property type="protein sequence ID" value="DAA09334.1"/>
    <property type="molecule type" value="Genomic_DNA"/>
</dbReference>
<dbReference type="PIR" id="S64838">
    <property type="entry name" value="S64838"/>
</dbReference>
<dbReference type="RefSeq" id="NP_013116.1">
    <property type="nucleotide sequence ID" value="NM_001181903.1"/>
</dbReference>
<dbReference type="PDB" id="2JKD">
    <property type="method" value="X-ray"/>
    <property type="resolution" value="2.50 A"/>
    <property type="chains" value="A/B=25-204"/>
</dbReference>
<dbReference type="PDB" id="2MKC">
    <property type="method" value="NMR"/>
    <property type="chains" value="B=22-42"/>
</dbReference>
<dbReference type="PDB" id="2MY3">
    <property type="method" value="NMR"/>
    <property type="chains" value="B=22-42"/>
</dbReference>
<dbReference type="PDB" id="3ELS">
    <property type="method" value="X-ray"/>
    <property type="resolution" value="1.80 A"/>
    <property type="chains" value="A=51-204"/>
</dbReference>
<dbReference type="PDB" id="3ELV">
    <property type="method" value="X-ray"/>
    <property type="resolution" value="2.40 A"/>
    <property type="chains" value="A/B=1-204"/>
</dbReference>
<dbReference type="PDB" id="5GM6">
    <property type="method" value="EM"/>
    <property type="resolution" value="3.50 A"/>
    <property type="chains" value="U=1-204"/>
</dbReference>
<dbReference type="PDB" id="5LQW">
    <property type="method" value="EM"/>
    <property type="resolution" value="5.80 A"/>
    <property type="chains" value="N=1-204"/>
</dbReference>
<dbReference type="PDB" id="5ZWM">
    <property type="method" value="EM"/>
    <property type="resolution" value="3.40 A"/>
    <property type="chains" value="Z=1-204"/>
</dbReference>
<dbReference type="PDB" id="5ZWO">
    <property type="method" value="EM"/>
    <property type="resolution" value="3.90 A"/>
    <property type="chains" value="Z=1-204"/>
</dbReference>
<dbReference type="PDB" id="7DCO">
    <property type="method" value="EM"/>
    <property type="resolution" value="2.50 A"/>
    <property type="chains" value="Y=1-204"/>
</dbReference>
<dbReference type="PDBsum" id="2JKD"/>
<dbReference type="PDBsum" id="2MKC"/>
<dbReference type="PDBsum" id="2MY3"/>
<dbReference type="PDBsum" id="3ELS"/>
<dbReference type="PDBsum" id="3ELV"/>
<dbReference type="PDBsum" id="5GM6"/>
<dbReference type="PDBsum" id="5LQW"/>
<dbReference type="PDBsum" id="5ZWM"/>
<dbReference type="PDBsum" id="5ZWO"/>
<dbReference type="PDBsum" id="7DCO"/>
<dbReference type="BMRB" id="Q07930"/>
<dbReference type="EMDB" id="EMD-30637"/>
<dbReference type="EMDB" id="EMD-6972"/>
<dbReference type="EMDB" id="EMD-6974"/>
<dbReference type="EMDB" id="EMD-9524"/>
<dbReference type="SMR" id="Q07930"/>
<dbReference type="BioGRID" id="31290">
    <property type="interactions" value="113"/>
</dbReference>
<dbReference type="ComplexPortal" id="CPX-1649">
    <property type="entry name" value="RES complex"/>
</dbReference>
<dbReference type="ComplexPortal" id="CPX-26">
    <property type="entry name" value="U2 small nuclear ribonucleoprotein complex"/>
</dbReference>
<dbReference type="DIP" id="DIP-2149N"/>
<dbReference type="FunCoup" id="Q07930">
    <property type="interactions" value="184"/>
</dbReference>
<dbReference type="IntAct" id="Q07930">
    <property type="interactions" value="12"/>
</dbReference>
<dbReference type="STRING" id="4932.YLR016C"/>
<dbReference type="PaxDb" id="4932-YLR016C"/>
<dbReference type="PeptideAtlas" id="Q07930"/>
<dbReference type="EnsemblFungi" id="YLR016C_mRNA">
    <property type="protein sequence ID" value="YLR016C"/>
    <property type="gene ID" value="YLR016C"/>
</dbReference>
<dbReference type="GeneID" id="850703"/>
<dbReference type="KEGG" id="sce:YLR016C"/>
<dbReference type="AGR" id="SGD:S000004006"/>
<dbReference type="SGD" id="S000004006">
    <property type="gene designation" value="PML1"/>
</dbReference>
<dbReference type="VEuPathDB" id="FungiDB:YLR016C"/>
<dbReference type="eggNOG" id="KOG1882">
    <property type="taxonomic scope" value="Eukaryota"/>
</dbReference>
<dbReference type="GeneTree" id="ENSGT00940000156553"/>
<dbReference type="HOGENOM" id="CLU_022457_1_3_1"/>
<dbReference type="InParanoid" id="Q07930"/>
<dbReference type="OMA" id="KCYVMDL"/>
<dbReference type="OrthoDB" id="444265at2759"/>
<dbReference type="BioCyc" id="YEAST:G3O-32177-MONOMER"/>
<dbReference type="BioGRID-ORCS" id="850703">
    <property type="hits" value="1 hit in 10 CRISPR screens"/>
</dbReference>
<dbReference type="EvolutionaryTrace" id="Q07930"/>
<dbReference type="PRO" id="PR:Q07930"/>
<dbReference type="Proteomes" id="UP000002311">
    <property type="component" value="Chromosome XII"/>
</dbReference>
<dbReference type="RNAct" id="Q07930">
    <property type="molecule type" value="protein"/>
</dbReference>
<dbReference type="GO" id="GO:0005737">
    <property type="term" value="C:cytoplasm"/>
    <property type="evidence" value="ECO:0007005"/>
    <property type="project" value="SGD"/>
</dbReference>
<dbReference type="GO" id="GO:0005634">
    <property type="term" value="C:nucleus"/>
    <property type="evidence" value="ECO:0007005"/>
    <property type="project" value="SGD"/>
</dbReference>
<dbReference type="GO" id="GO:0070274">
    <property type="term" value="C:RES complex"/>
    <property type="evidence" value="ECO:0000314"/>
    <property type="project" value="SGD"/>
</dbReference>
<dbReference type="GO" id="GO:0005681">
    <property type="term" value="C:spliceosomal complex"/>
    <property type="evidence" value="ECO:0000303"/>
    <property type="project" value="ComplexPortal"/>
</dbReference>
<dbReference type="GO" id="GO:0005686">
    <property type="term" value="C:U2 snRNP"/>
    <property type="evidence" value="ECO:0000303"/>
    <property type="project" value="ComplexPortal"/>
</dbReference>
<dbReference type="GO" id="GO:0003729">
    <property type="term" value="F:mRNA binding"/>
    <property type="evidence" value="ECO:0000318"/>
    <property type="project" value="GO_Central"/>
</dbReference>
<dbReference type="GO" id="GO:0051237">
    <property type="term" value="P:maintenance of RNA location"/>
    <property type="evidence" value="ECO:0000315"/>
    <property type="project" value="ComplexPortal"/>
</dbReference>
<dbReference type="GO" id="GO:0006406">
    <property type="term" value="P:mRNA export from nucleus"/>
    <property type="evidence" value="ECO:0000315"/>
    <property type="project" value="SGD"/>
</dbReference>
<dbReference type="GO" id="GO:0000398">
    <property type="term" value="P:mRNA splicing, via spliceosome"/>
    <property type="evidence" value="ECO:0000314"/>
    <property type="project" value="SGD"/>
</dbReference>
<dbReference type="GO" id="GO:1903241">
    <property type="term" value="P:U2-type prespliceosome assembly"/>
    <property type="evidence" value="ECO:0000303"/>
    <property type="project" value="ComplexPortal"/>
</dbReference>
<dbReference type="CDD" id="cd22681">
    <property type="entry name" value="FHA_PML1-like"/>
    <property type="match status" value="1"/>
</dbReference>
<dbReference type="DisProt" id="DP01890"/>
<dbReference type="FunFam" id="2.60.200.20:FF:000073">
    <property type="entry name" value="Pre-mRNA leakage protein 1"/>
    <property type="match status" value="1"/>
</dbReference>
<dbReference type="Gene3D" id="2.60.200.20">
    <property type="match status" value="1"/>
</dbReference>
<dbReference type="InterPro" id="IPR050923">
    <property type="entry name" value="Cell_Proc_Reg/RNA_Proc"/>
</dbReference>
<dbReference type="InterPro" id="IPR000253">
    <property type="entry name" value="FHA_dom"/>
</dbReference>
<dbReference type="InterPro" id="IPR008984">
    <property type="entry name" value="SMAD_FHA_dom_sf"/>
</dbReference>
<dbReference type="PANTHER" id="PTHR23308">
    <property type="entry name" value="NUCLEAR INHIBITOR OF PROTEIN PHOSPHATASE-1"/>
    <property type="match status" value="1"/>
</dbReference>
<dbReference type="Pfam" id="PF00498">
    <property type="entry name" value="FHA"/>
    <property type="match status" value="1"/>
</dbReference>
<dbReference type="SMART" id="SM00240">
    <property type="entry name" value="FHA"/>
    <property type="match status" value="1"/>
</dbReference>
<dbReference type="SUPFAM" id="SSF49879">
    <property type="entry name" value="SMAD/FHA domain"/>
    <property type="match status" value="1"/>
</dbReference>
<dbReference type="PROSITE" id="PS50006">
    <property type="entry name" value="FHA_DOMAIN"/>
    <property type="match status" value="1"/>
</dbReference>
<reference key="1">
    <citation type="submission" date="1995-09" db="EMBL/GenBank/DDBJ databases">
        <title>A 7.8kb fragment from chromosome XII of Saccharomyces cerevisiae does not harbour PKC2.</title>
        <authorList>
            <person name="Saville S.P."/>
            <person name="Atkinson S."/>
            <person name="Jamieson L."/>
            <person name="Pocklington M.J."/>
            <person name="Orr E."/>
        </authorList>
    </citation>
    <scope>NUCLEOTIDE SEQUENCE [LARGE SCALE GENOMIC DNA]</scope>
    <source>
        <strain>ATCC 204508 / S288c</strain>
    </source>
</reference>
<reference key="2">
    <citation type="journal article" date="2014" name="G3 (Bethesda)">
        <title>The reference genome sequence of Saccharomyces cerevisiae: Then and now.</title>
        <authorList>
            <person name="Engel S.R."/>
            <person name="Dietrich F.S."/>
            <person name="Fisk D.G."/>
            <person name="Binkley G."/>
            <person name="Balakrishnan R."/>
            <person name="Costanzo M.C."/>
            <person name="Dwight S.S."/>
            <person name="Hitz B.C."/>
            <person name="Karra K."/>
            <person name="Nash R.S."/>
            <person name="Weng S."/>
            <person name="Wong E.D."/>
            <person name="Lloyd P."/>
            <person name="Skrzypek M.S."/>
            <person name="Miyasato S.R."/>
            <person name="Simison M."/>
            <person name="Cherry J.M."/>
        </authorList>
    </citation>
    <scope>GENOME REANNOTATION</scope>
    <source>
        <strain>ATCC 204508 / S288c</strain>
    </source>
</reference>
<reference key="3">
    <citation type="journal article" date="1997" name="Nature">
        <title>The nucleotide sequence of Saccharomyces cerevisiae chromosome XII.</title>
        <authorList>
            <person name="Johnston M."/>
            <person name="Hillier L.W."/>
            <person name="Riles L."/>
            <person name="Albermann K."/>
            <person name="Andre B."/>
            <person name="Ansorge W."/>
            <person name="Benes V."/>
            <person name="Brueckner M."/>
            <person name="Delius H."/>
            <person name="Dubois E."/>
            <person name="Duesterhoeft A."/>
            <person name="Entian K.-D."/>
            <person name="Floeth M."/>
            <person name="Goffeau A."/>
            <person name="Hebling U."/>
            <person name="Heumann K."/>
            <person name="Heuss-Neitzel D."/>
            <person name="Hilbert H."/>
            <person name="Hilger F."/>
            <person name="Kleine K."/>
            <person name="Koetter P."/>
            <person name="Louis E.J."/>
            <person name="Messenguy F."/>
            <person name="Mewes H.-W."/>
            <person name="Miosga T."/>
            <person name="Moestl D."/>
            <person name="Mueller-Auer S."/>
            <person name="Nentwich U."/>
            <person name="Obermaier B."/>
            <person name="Piravandi E."/>
            <person name="Pohl T.M."/>
            <person name="Portetelle D."/>
            <person name="Purnelle B."/>
            <person name="Rechmann S."/>
            <person name="Rieger M."/>
            <person name="Rinke M."/>
            <person name="Rose M."/>
            <person name="Scharfe M."/>
            <person name="Scherens B."/>
            <person name="Scholler P."/>
            <person name="Schwager C."/>
            <person name="Schwarz S."/>
            <person name="Underwood A.P."/>
            <person name="Urrestarazu L.A."/>
            <person name="Vandenbol M."/>
            <person name="Verhasselt P."/>
            <person name="Vierendeels F."/>
            <person name="Voet M."/>
            <person name="Volckaert G."/>
            <person name="Voss H."/>
            <person name="Wambutt R."/>
            <person name="Wedler E."/>
            <person name="Wedler H."/>
            <person name="Zimmermann F.K."/>
            <person name="Zollner A."/>
            <person name="Hani J."/>
            <person name="Hoheisel J.D."/>
        </authorList>
    </citation>
    <scope>NUCLEOTIDE SEQUENCE [LARGE SCALE GENOMIC DNA]</scope>
    <source>
        <strain>ATCC 204508 / S288c</strain>
    </source>
</reference>
<reference key="4">
    <citation type="journal article" date="2007" name="Genome Res.">
        <title>Approaching a complete repository of sequence-verified protein-encoding clones for Saccharomyces cerevisiae.</title>
        <authorList>
            <person name="Hu Y."/>
            <person name="Rolfs A."/>
            <person name="Bhullar B."/>
            <person name="Murthy T.V.S."/>
            <person name="Zhu C."/>
            <person name="Berger M.F."/>
            <person name="Camargo A.A."/>
            <person name="Kelley F."/>
            <person name="McCarron S."/>
            <person name="Jepson D."/>
            <person name="Richardson A."/>
            <person name="Raphael J."/>
            <person name="Moreira D."/>
            <person name="Taycher E."/>
            <person name="Zuo D."/>
            <person name="Mohr S."/>
            <person name="Kane M.F."/>
            <person name="Williamson J."/>
            <person name="Simpson A.J.G."/>
            <person name="Bulyk M.L."/>
            <person name="Harlow E."/>
            <person name="Marsischky G."/>
            <person name="Kolodner R.D."/>
            <person name="LaBaer J."/>
        </authorList>
    </citation>
    <scope>NUCLEOTIDE SEQUENCE [GENOMIC DNA]</scope>
    <source>
        <strain>ATCC 204508 / S288c</strain>
    </source>
</reference>
<reference key="5">
    <citation type="journal article" date="2003" name="Nature">
        <title>Global analysis of protein localization in budding yeast.</title>
        <authorList>
            <person name="Huh W.-K."/>
            <person name="Falvo J.V."/>
            <person name="Gerke L.C."/>
            <person name="Carroll A.S."/>
            <person name="Howson R.W."/>
            <person name="Weissman J.S."/>
            <person name="O'Shea E.K."/>
        </authorList>
    </citation>
    <scope>SUBCELLULAR LOCATION [LARGE SCALE ANALYSIS]</scope>
</reference>
<reference key="6">
    <citation type="journal article" date="2003" name="Nature">
        <title>Global analysis of protein expression in yeast.</title>
        <authorList>
            <person name="Ghaemmaghami S."/>
            <person name="Huh W.-K."/>
            <person name="Bower K."/>
            <person name="Howson R.W."/>
            <person name="Belle A."/>
            <person name="Dephoure N."/>
            <person name="O'Shea E.K."/>
            <person name="Weissman J.S."/>
        </authorList>
    </citation>
    <scope>LEVEL OF PROTEIN EXPRESSION [LARGE SCALE ANALYSIS]</scope>
</reference>
<reference key="7">
    <citation type="journal article" date="2004" name="EMBO J.">
        <title>Proteomic analysis identifies a new complex required for nuclear pre-mRNA retention and splicing.</title>
        <authorList>
            <person name="Dziembowski A."/>
            <person name="Ventura A.-P."/>
            <person name="Rutz B."/>
            <person name="Caspary F."/>
            <person name="Faux C."/>
            <person name="Halgand F."/>
            <person name="Laprevote O."/>
            <person name="Seraphin B."/>
        </authorList>
    </citation>
    <scope>FUNCTION</scope>
    <scope>IDENTIFICATION BY MASS SPECTROMETRY</scope>
    <scope>INTERACTION WITH IST3 AND BUD13</scope>
</reference>
<evidence type="ECO:0000255" key="1">
    <source>
        <dbReference type="PROSITE-ProRule" id="PRU00086"/>
    </source>
</evidence>
<evidence type="ECO:0000269" key="2">
    <source>
    </source>
</evidence>
<evidence type="ECO:0000269" key="3">
    <source>
    </source>
</evidence>
<evidence type="ECO:0000269" key="4">
    <source>
    </source>
</evidence>
<evidence type="ECO:0000305" key="5"/>
<evidence type="ECO:0007829" key="6">
    <source>
        <dbReference type="PDB" id="2JKD"/>
    </source>
</evidence>
<evidence type="ECO:0007829" key="7">
    <source>
        <dbReference type="PDB" id="2MKC"/>
    </source>
</evidence>
<evidence type="ECO:0007829" key="8">
    <source>
        <dbReference type="PDB" id="3ELS"/>
    </source>
</evidence>
<proteinExistence type="evidence at protein level"/>
<feature type="chain" id="PRO_0000058466" description="Pre-mRNA leakage protein 1">
    <location>
        <begin position="1"/>
        <end position="204"/>
    </location>
</feature>
<feature type="domain" description="FHA" evidence="1">
    <location>
        <begin position="104"/>
        <end position="172"/>
    </location>
</feature>
<feature type="sequence conflict" description="In Ref. 1; CAA62157." evidence="5" ref="1">
    <original>G</original>
    <variation>A</variation>
    <location>
        <position position="15"/>
    </location>
</feature>
<feature type="helix" evidence="7">
    <location>
        <begin position="38"/>
        <end position="41"/>
    </location>
</feature>
<feature type="helix" evidence="8">
    <location>
        <begin position="61"/>
        <end position="67"/>
    </location>
</feature>
<feature type="helix" evidence="8">
    <location>
        <begin position="72"/>
        <end position="74"/>
    </location>
</feature>
<feature type="strand" evidence="8">
    <location>
        <begin position="78"/>
        <end position="84"/>
    </location>
</feature>
<feature type="helix" evidence="8">
    <location>
        <begin position="85"/>
        <end position="90"/>
    </location>
</feature>
<feature type="strand" evidence="8">
    <location>
        <begin position="93"/>
        <end position="97"/>
    </location>
</feature>
<feature type="strand" evidence="8">
    <location>
        <begin position="102"/>
        <end position="108"/>
    </location>
</feature>
<feature type="strand" evidence="8">
    <location>
        <begin position="128"/>
        <end position="131"/>
    </location>
</feature>
<feature type="strand" evidence="8">
    <location>
        <begin position="141"/>
        <end position="148"/>
    </location>
</feature>
<feature type="strand" evidence="8">
    <location>
        <begin position="151"/>
        <end position="158"/>
    </location>
</feature>
<feature type="strand" evidence="6">
    <location>
        <begin position="178"/>
        <end position="180"/>
    </location>
</feature>
<feature type="strand" evidence="8">
    <location>
        <begin position="184"/>
        <end position="190"/>
    </location>
</feature>
<feature type="helix" evidence="8">
    <location>
        <begin position="192"/>
        <end position="194"/>
    </location>
</feature>
<feature type="strand" evidence="8">
    <location>
        <begin position="197"/>
        <end position="203"/>
    </location>
</feature>
<gene>
    <name type="primary">PML1</name>
    <name type="ordered locus">YLR016C</name>
    <name type="ORF">L1591</name>
</gene>
<protein>
    <recommendedName>
        <fullName>Pre-mRNA leakage protein 1</fullName>
    </recommendedName>
</protein>
<sequence length="204" mass="23654">MFHRRKRPYNTRNYGHDDKKFKSQYIDIMPDFSPSGLLELESNNKEGIALKHVEPQDAISPDNYMDMLGLEARDRTMYELVIYRKNDKDKGPWKRYDLNGRSCYLVGRELGHSLDTDLDDRTEIVVADIGIPEETSSKQHCVIQFRNVRGILKCYVMDLDSSNGTCLNNVVIPGARYIELRSGDVLTLSEFEEDNDYELIFMNV</sequence>
<organism>
    <name type="scientific">Saccharomyces cerevisiae (strain ATCC 204508 / S288c)</name>
    <name type="common">Baker's yeast</name>
    <dbReference type="NCBI Taxonomy" id="559292"/>
    <lineage>
        <taxon>Eukaryota</taxon>
        <taxon>Fungi</taxon>
        <taxon>Dikarya</taxon>
        <taxon>Ascomycota</taxon>
        <taxon>Saccharomycotina</taxon>
        <taxon>Saccharomycetes</taxon>
        <taxon>Saccharomycetales</taxon>
        <taxon>Saccharomycetaceae</taxon>
        <taxon>Saccharomyces</taxon>
    </lineage>
</organism>
<comment type="function">
    <text evidence="4">Required for efficient splicing and pre-mRNA nuclear retention.</text>
</comment>
<comment type="subunit">
    <text>Belongs to the pre-mRNA retention and splicing (RES) complex composed of at least BUD13, IST3 and PML1.</text>
</comment>
<comment type="interaction">
    <interactant intactId="EBI-27110">
        <id>Q07930</id>
    </interactant>
    <interactant intactId="EBI-25387">
        <id>P40565</id>
        <label>IST3</label>
    </interactant>
    <organismsDiffer>false</organismsDiffer>
    <experiments>6</experiments>
</comment>
<comment type="subcellular location">
    <subcellularLocation>
        <location evidence="2">Cytoplasm</location>
    </subcellularLocation>
    <subcellularLocation>
        <location evidence="2">Nucleus</location>
    </subcellularLocation>
</comment>
<comment type="miscellaneous">
    <text evidence="3">Present with 1470 molecules/cell in log phase SD medium.</text>
</comment>
<comment type="sequence caution" evidence="5">
    <conflict type="frameshift">
        <sequence resource="EMBL-CDS" id="CAA62157"/>
    </conflict>
</comment>
<accession>Q07930</accession>
<accession>D6VY18</accession>
<accession>Q06901</accession>